<protein>
    <recommendedName>
        <fullName>Solute carrier family 7 member 13</fullName>
    </recommendedName>
    <alternativeName>
        <fullName>Sodium-independent aspartate/glutamate transporter 1</fullName>
    </alternativeName>
    <alternativeName>
        <fullName>X-amino acid transporter 2</fullName>
    </alternativeName>
</protein>
<gene>
    <name evidence="5 7" type="primary">Slc7a13</name>
    <name evidence="5" type="synonym">Agt1</name>
    <name type="synonym">Xat2</name>
</gene>
<sequence length="478" mass="53233">MAMDSKKEIRLKRELGYFWGTNFLIINIIGAGIFVSPKGVLQHSSMNVGVSLCVWAVCAVLTLTSALCSAEIGITFPYSGAHYYFLKRCFGPLVAFLRLWTSLFLGPGLIASQALLLAEYGVQPFYPSCSAPILPRKCLALAMLWIVGILNSRGVKELSWLQTVSSVLKVGILGVISLSGLFLLVRGKKENVQRLQNAFDAEFPEVSQLIEAIFQGYFAFSGGGCFTCIAGELKKPSKTIPRCIFTGLPLVTVVYLLANISYLTVLTPQEMLSSDAVALTWTDRVIPQFTWTVPFAISASLFINLVINVLETSRVLYIASENGQLPLLFCALNVHSSPFIAVLLIISMASILIVLTNLIDLINYLYFVVSIWTALSIIGILKLRYQEPNLHRPYKVFLPFTFIALGITLSLVLIPLVKSPKLHYIYVFLFLLSGLVFYVPLIHFKVKFVWFQKLTCYLQLLFNICIPDVSDDHIHEES</sequence>
<comment type="function">
    <text evidence="2 4">Associates with SLC3A1/rBAT to form a functional heterodimeric complex that transports anionic and neutral amino acids across the apical plasma membrane of renal epithelium. Preferentially mediates exchange transport, but can also operate via facilitated diffusion. May act as a major transporter for L-cystine in late proximal tubules, ensuring its reabsorption from the luminal fluid in exchange for cytosolic L-glutamate or L-aspartate.</text>
</comment>
<comment type="catalytic activity">
    <reaction evidence="4">
        <text>L-cystine(out) + L-aspartate(in) = L-cystine(in) + L-aspartate(out)</text>
        <dbReference type="Rhea" id="RHEA:76299"/>
        <dbReference type="ChEBI" id="CHEBI:29991"/>
        <dbReference type="ChEBI" id="CHEBI:35491"/>
    </reaction>
</comment>
<comment type="catalytic activity">
    <reaction evidence="4">
        <text>L-cystine(out) = L-cystine(in)</text>
        <dbReference type="Rhea" id="RHEA:76303"/>
        <dbReference type="ChEBI" id="CHEBI:35491"/>
    </reaction>
</comment>
<comment type="catalytic activity">
    <reaction evidence="4">
        <text>L-aspartate(in) + L-glutamate(out) = L-aspartate(out) + L-glutamate(in)</text>
        <dbReference type="Rhea" id="RHEA:76307"/>
        <dbReference type="ChEBI" id="CHEBI:29985"/>
        <dbReference type="ChEBI" id="CHEBI:29991"/>
    </reaction>
</comment>
<comment type="catalytic activity">
    <reaction evidence="4">
        <text>L-aspartate(in) + L-glutamine(out) = L-aspartate(out) + L-glutamine(in)</text>
        <dbReference type="Rhea" id="RHEA:76311"/>
        <dbReference type="ChEBI" id="CHEBI:29991"/>
        <dbReference type="ChEBI" id="CHEBI:58359"/>
    </reaction>
</comment>
<comment type="catalytic activity">
    <reaction evidence="4">
        <text>L-aspartate(in) + L-methionine(out) = L-aspartate(out) + L-methionine(in)</text>
        <dbReference type="Rhea" id="RHEA:76315"/>
        <dbReference type="ChEBI" id="CHEBI:29991"/>
        <dbReference type="ChEBI" id="CHEBI:57844"/>
    </reaction>
</comment>
<comment type="catalytic activity">
    <reaction evidence="4">
        <text>L-leucine(out) + L-aspartate(in) = L-leucine(in) + L-aspartate(out)</text>
        <dbReference type="Rhea" id="RHEA:76319"/>
        <dbReference type="ChEBI" id="CHEBI:29991"/>
        <dbReference type="ChEBI" id="CHEBI:57427"/>
    </reaction>
</comment>
<comment type="catalytic activity">
    <reaction evidence="4">
        <text>L-valine(out) + L-aspartate(in) = L-valine(in) + L-aspartate(out)</text>
        <dbReference type="Rhea" id="RHEA:76323"/>
        <dbReference type="ChEBI" id="CHEBI:29991"/>
        <dbReference type="ChEBI" id="CHEBI:57762"/>
    </reaction>
</comment>
<comment type="catalytic activity">
    <reaction evidence="4">
        <text>L-aspartate(in) + L-phenylalanine(out) = L-aspartate(out) + L-phenylalanine(in)</text>
        <dbReference type="Rhea" id="RHEA:76327"/>
        <dbReference type="ChEBI" id="CHEBI:29991"/>
        <dbReference type="ChEBI" id="CHEBI:58095"/>
    </reaction>
</comment>
<comment type="catalytic activity">
    <reaction evidence="4">
        <text>L-tyrosine(out) + L-aspartate(in) = L-tyrosine(in) + L-aspartate(out)</text>
        <dbReference type="Rhea" id="RHEA:76331"/>
        <dbReference type="ChEBI" id="CHEBI:29991"/>
        <dbReference type="ChEBI" id="CHEBI:58315"/>
    </reaction>
</comment>
<comment type="catalytic activity">
    <reaction evidence="4">
        <text>L-tryptophan(out) + L-aspartate(in) = L-tryptophan(in) + L-aspartate(out)</text>
        <dbReference type="Rhea" id="RHEA:76335"/>
        <dbReference type="ChEBI" id="CHEBI:29991"/>
        <dbReference type="ChEBI" id="CHEBI:57912"/>
    </reaction>
</comment>
<comment type="biophysicochemical properties">
    <kinetics>
        <KM evidence="4">67.6 uM for L-cystine (uniport)</KM>
    </kinetics>
</comment>
<comment type="subunit">
    <text evidence="4">Disulfide-linked heterodimer composed of the catalytic light subunit SLC7A13 and the heavy subunit SLC3A1.</text>
</comment>
<comment type="subcellular location">
    <subcellularLocation>
        <location evidence="4">Apical cell membrane</location>
        <topology evidence="1">Multi-pass membrane protein</topology>
    </subcellularLocation>
</comment>
<comment type="tissue specificity">
    <text evidence="2 3 4">Expressed in renal tubules in the outer stripe of the outer medulla and medullary ray (at protein level). Detected in male but not in female kidney.</text>
</comment>
<comment type="similarity">
    <text evidence="6">Belongs to the amino acid-polyamine-organocation (APC) superfamily.</text>
</comment>
<evidence type="ECO:0000255" key="1"/>
<evidence type="ECO:0000269" key="2">
    <source>
    </source>
</evidence>
<evidence type="ECO:0000269" key="3">
    <source>
    </source>
</evidence>
<evidence type="ECO:0000269" key="4">
    <source>
    </source>
</evidence>
<evidence type="ECO:0000303" key="5">
    <source>
    </source>
</evidence>
<evidence type="ECO:0000305" key="6"/>
<evidence type="ECO:0000312" key="7">
    <source>
        <dbReference type="MGI" id="MGI:1921337"/>
    </source>
</evidence>
<accession>Q91WN3</accession>
<organism>
    <name type="scientific">Mus musculus</name>
    <name type="common">Mouse</name>
    <dbReference type="NCBI Taxonomy" id="10090"/>
    <lineage>
        <taxon>Eukaryota</taxon>
        <taxon>Metazoa</taxon>
        <taxon>Chordata</taxon>
        <taxon>Craniata</taxon>
        <taxon>Vertebrata</taxon>
        <taxon>Euteleostomi</taxon>
        <taxon>Mammalia</taxon>
        <taxon>Eutheria</taxon>
        <taxon>Euarchontoglires</taxon>
        <taxon>Glires</taxon>
        <taxon>Rodentia</taxon>
        <taxon>Myomorpha</taxon>
        <taxon>Muroidea</taxon>
        <taxon>Muridae</taxon>
        <taxon>Murinae</taxon>
        <taxon>Mus</taxon>
        <taxon>Mus</taxon>
    </lineage>
</organism>
<name>S7A13_MOUSE</name>
<keyword id="KW-0029">Amino-acid transport</keyword>
<keyword id="KW-0050">Antiport</keyword>
<keyword id="KW-1003">Cell membrane</keyword>
<keyword id="KW-1015">Disulfide bond</keyword>
<keyword id="KW-0472">Membrane</keyword>
<keyword id="KW-1185">Reference proteome</keyword>
<keyword id="KW-0812">Transmembrane</keyword>
<keyword id="KW-1133">Transmembrane helix</keyword>
<keyword id="KW-0813">Transport</keyword>
<feature type="chain" id="PRO_0000330726" description="Solute carrier family 7 member 13">
    <location>
        <begin position="1"/>
        <end position="478"/>
    </location>
</feature>
<feature type="topological domain" description="Cytoplasmic" evidence="1">
    <location>
        <begin position="1"/>
        <end position="14"/>
    </location>
</feature>
<feature type="transmembrane region" description="Helical; Name=1" evidence="1">
    <location>
        <begin position="15"/>
        <end position="35"/>
    </location>
</feature>
<feature type="topological domain" description="Extracellular" evidence="1">
    <location>
        <begin position="36"/>
        <end position="47"/>
    </location>
</feature>
<feature type="transmembrane region" description="Helical; Name=2" evidence="1">
    <location>
        <begin position="48"/>
        <end position="68"/>
    </location>
</feature>
<feature type="topological domain" description="Cytoplasmic" evidence="1">
    <location>
        <begin position="69"/>
        <end position="89"/>
    </location>
</feature>
<feature type="transmembrane region" description="Helical; Name=3" evidence="1">
    <location>
        <begin position="90"/>
        <end position="110"/>
    </location>
</feature>
<feature type="topological domain" description="Extracellular" evidence="1">
    <location>
        <begin position="111"/>
        <end position="129"/>
    </location>
</feature>
<feature type="transmembrane region" description="Helical; Name=4" evidence="1">
    <location>
        <begin position="130"/>
        <end position="150"/>
    </location>
</feature>
<feature type="topological domain" description="Cytoplasmic" evidence="1">
    <location>
        <begin position="151"/>
        <end position="163"/>
    </location>
</feature>
<feature type="transmembrane region" description="Helical; Name=5" evidence="1">
    <location>
        <begin position="164"/>
        <end position="184"/>
    </location>
</feature>
<feature type="topological domain" description="Extracellular" evidence="1">
    <location>
        <begin position="185"/>
        <end position="208"/>
    </location>
</feature>
<feature type="transmembrane region" description="Helical; Name=6" evidence="1">
    <location>
        <begin position="209"/>
        <end position="229"/>
    </location>
</feature>
<feature type="topological domain" description="Cytoplasmic" evidence="1">
    <location>
        <begin position="230"/>
        <end position="242"/>
    </location>
</feature>
<feature type="transmembrane region" description="Helical; Name=7" evidence="1">
    <location>
        <begin position="243"/>
        <end position="263"/>
    </location>
</feature>
<feature type="topological domain" description="Extracellular" evidence="1">
    <location>
        <begin position="264"/>
        <end position="288"/>
    </location>
</feature>
<feature type="transmembrane region" description="Helical; Name=8" evidence="1">
    <location>
        <begin position="289"/>
        <end position="309"/>
    </location>
</feature>
<feature type="topological domain" description="Cytoplasmic" evidence="1">
    <location>
        <begin position="310"/>
        <end position="338"/>
    </location>
</feature>
<feature type="transmembrane region" description="Helical; Name=9" evidence="1">
    <location>
        <begin position="339"/>
        <end position="359"/>
    </location>
</feature>
<feature type="topological domain" description="Extracellular" evidence="1">
    <location>
        <position position="360"/>
    </location>
</feature>
<feature type="transmembrane region" description="Helical; Name=10" evidence="1">
    <location>
        <begin position="361"/>
        <end position="381"/>
    </location>
</feature>
<feature type="topological domain" description="Cytoplasmic" evidence="1">
    <location>
        <begin position="382"/>
        <end position="395"/>
    </location>
</feature>
<feature type="transmembrane region" description="Helical; Name=11" evidence="1">
    <location>
        <begin position="396"/>
        <end position="416"/>
    </location>
</feature>
<feature type="topological domain" description="Extracellular" evidence="1">
    <location>
        <begin position="417"/>
        <end position="423"/>
    </location>
</feature>
<feature type="transmembrane region" description="Helical; Name=12" evidence="1">
    <location>
        <begin position="424"/>
        <end position="444"/>
    </location>
</feature>
<feature type="topological domain" description="Cytoplasmic" evidence="1">
    <location>
        <begin position="445"/>
        <end position="478"/>
    </location>
</feature>
<reference key="1">
    <citation type="journal article" date="2002" name="Gene">
        <title>Homologues of amino acid permeases: cloning and tissue expression of XAT1 and XAT2.</title>
        <authorList>
            <person name="Blondeau J.-P."/>
        </authorList>
    </citation>
    <scope>NUCLEOTIDE SEQUENCE [MRNA]</scope>
    <scope>TISSUE SPECIFICITY</scope>
    <source>
        <strain>BALB/cJ</strain>
        <tissue>Kidney</tissue>
    </source>
</reference>
<reference key="2">
    <citation type="journal article" date="2002" name="J. Biol. Chem.">
        <title>Identification of a novel Na+-independent acidic amino acid transporter with structural similarity to the member of a heterodimeric amino acid transporter family associated with unknown heavy chains.</title>
        <authorList>
            <person name="Matsuo H."/>
            <person name="Kanai Y."/>
            <person name="Kim J.Y."/>
            <person name="Chairoungdua A."/>
            <person name="Kim D.K."/>
            <person name="Inatomi J."/>
            <person name="Shigeta Y."/>
            <person name="Ishimine H."/>
            <person name="Chaekuntode S."/>
            <person name="Tachampa K."/>
            <person name="Choi H.W."/>
            <person name="Babu E."/>
            <person name="Fukuda J."/>
            <person name="Endou H."/>
        </authorList>
    </citation>
    <scope>NUCLEOTIDE SEQUENCE [MRNA]</scope>
    <scope>FUNCTION</scope>
    <scope>TISSUE SPECIFICITY</scope>
    <source>
        <strain>ICR</strain>
        <tissue>Kidney</tissue>
    </source>
</reference>
<reference key="3">
    <citation type="journal article" date="2005" name="Science">
        <title>The transcriptional landscape of the mammalian genome.</title>
        <authorList>
            <person name="Carninci P."/>
            <person name="Kasukawa T."/>
            <person name="Katayama S."/>
            <person name="Gough J."/>
            <person name="Frith M.C."/>
            <person name="Maeda N."/>
            <person name="Oyama R."/>
            <person name="Ravasi T."/>
            <person name="Lenhard B."/>
            <person name="Wells C."/>
            <person name="Kodzius R."/>
            <person name="Shimokawa K."/>
            <person name="Bajic V.B."/>
            <person name="Brenner S.E."/>
            <person name="Batalov S."/>
            <person name="Forrest A.R."/>
            <person name="Zavolan M."/>
            <person name="Davis M.J."/>
            <person name="Wilming L.G."/>
            <person name="Aidinis V."/>
            <person name="Allen J.E."/>
            <person name="Ambesi-Impiombato A."/>
            <person name="Apweiler R."/>
            <person name="Aturaliya R.N."/>
            <person name="Bailey T.L."/>
            <person name="Bansal M."/>
            <person name="Baxter L."/>
            <person name="Beisel K.W."/>
            <person name="Bersano T."/>
            <person name="Bono H."/>
            <person name="Chalk A.M."/>
            <person name="Chiu K.P."/>
            <person name="Choudhary V."/>
            <person name="Christoffels A."/>
            <person name="Clutterbuck D.R."/>
            <person name="Crowe M.L."/>
            <person name="Dalla E."/>
            <person name="Dalrymple B.P."/>
            <person name="de Bono B."/>
            <person name="Della Gatta G."/>
            <person name="di Bernardo D."/>
            <person name="Down T."/>
            <person name="Engstrom P."/>
            <person name="Fagiolini M."/>
            <person name="Faulkner G."/>
            <person name="Fletcher C.F."/>
            <person name="Fukushima T."/>
            <person name="Furuno M."/>
            <person name="Futaki S."/>
            <person name="Gariboldi M."/>
            <person name="Georgii-Hemming P."/>
            <person name="Gingeras T.R."/>
            <person name="Gojobori T."/>
            <person name="Green R.E."/>
            <person name="Gustincich S."/>
            <person name="Harbers M."/>
            <person name="Hayashi Y."/>
            <person name="Hensch T.K."/>
            <person name="Hirokawa N."/>
            <person name="Hill D."/>
            <person name="Huminiecki L."/>
            <person name="Iacono M."/>
            <person name="Ikeo K."/>
            <person name="Iwama A."/>
            <person name="Ishikawa T."/>
            <person name="Jakt M."/>
            <person name="Kanapin A."/>
            <person name="Katoh M."/>
            <person name="Kawasawa Y."/>
            <person name="Kelso J."/>
            <person name="Kitamura H."/>
            <person name="Kitano H."/>
            <person name="Kollias G."/>
            <person name="Krishnan S.P."/>
            <person name="Kruger A."/>
            <person name="Kummerfeld S.K."/>
            <person name="Kurochkin I.V."/>
            <person name="Lareau L.F."/>
            <person name="Lazarevic D."/>
            <person name="Lipovich L."/>
            <person name="Liu J."/>
            <person name="Liuni S."/>
            <person name="McWilliam S."/>
            <person name="Madan Babu M."/>
            <person name="Madera M."/>
            <person name="Marchionni L."/>
            <person name="Matsuda H."/>
            <person name="Matsuzawa S."/>
            <person name="Miki H."/>
            <person name="Mignone F."/>
            <person name="Miyake S."/>
            <person name="Morris K."/>
            <person name="Mottagui-Tabar S."/>
            <person name="Mulder N."/>
            <person name="Nakano N."/>
            <person name="Nakauchi H."/>
            <person name="Ng P."/>
            <person name="Nilsson R."/>
            <person name="Nishiguchi S."/>
            <person name="Nishikawa S."/>
            <person name="Nori F."/>
            <person name="Ohara O."/>
            <person name="Okazaki Y."/>
            <person name="Orlando V."/>
            <person name="Pang K.C."/>
            <person name="Pavan W.J."/>
            <person name="Pavesi G."/>
            <person name="Pesole G."/>
            <person name="Petrovsky N."/>
            <person name="Piazza S."/>
            <person name="Reed J."/>
            <person name="Reid J.F."/>
            <person name="Ring B.Z."/>
            <person name="Ringwald M."/>
            <person name="Rost B."/>
            <person name="Ruan Y."/>
            <person name="Salzberg S.L."/>
            <person name="Sandelin A."/>
            <person name="Schneider C."/>
            <person name="Schoenbach C."/>
            <person name="Sekiguchi K."/>
            <person name="Semple C.A."/>
            <person name="Seno S."/>
            <person name="Sessa L."/>
            <person name="Sheng Y."/>
            <person name="Shibata Y."/>
            <person name="Shimada H."/>
            <person name="Shimada K."/>
            <person name="Silva D."/>
            <person name="Sinclair B."/>
            <person name="Sperling S."/>
            <person name="Stupka E."/>
            <person name="Sugiura K."/>
            <person name="Sultana R."/>
            <person name="Takenaka Y."/>
            <person name="Taki K."/>
            <person name="Tammoja K."/>
            <person name="Tan S.L."/>
            <person name="Tang S."/>
            <person name="Taylor M.S."/>
            <person name="Tegner J."/>
            <person name="Teichmann S.A."/>
            <person name="Ueda H.R."/>
            <person name="van Nimwegen E."/>
            <person name="Verardo R."/>
            <person name="Wei C.L."/>
            <person name="Yagi K."/>
            <person name="Yamanishi H."/>
            <person name="Zabarovsky E."/>
            <person name="Zhu S."/>
            <person name="Zimmer A."/>
            <person name="Hide W."/>
            <person name="Bult C."/>
            <person name="Grimmond S.M."/>
            <person name="Teasdale R.D."/>
            <person name="Liu E.T."/>
            <person name="Brusic V."/>
            <person name="Quackenbush J."/>
            <person name="Wahlestedt C."/>
            <person name="Mattick J.S."/>
            <person name="Hume D.A."/>
            <person name="Kai C."/>
            <person name="Sasaki D."/>
            <person name="Tomaru Y."/>
            <person name="Fukuda S."/>
            <person name="Kanamori-Katayama M."/>
            <person name="Suzuki M."/>
            <person name="Aoki J."/>
            <person name="Arakawa T."/>
            <person name="Iida J."/>
            <person name="Imamura K."/>
            <person name="Itoh M."/>
            <person name="Kato T."/>
            <person name="Kawaji H."/>
            <person name="Kawagashira N."/>
            <person name="Kawashima T."/>
            <person name="Kojima M."/>
            <person name="Kondo S."/>
            <person name="Konno H."/>
            <person name="Nakano K."/>
            <person name="Ninomiya N."/>
            <person name="Nishio T."/>
            <person name="Okada M."/>
            <person name="Plessy C."/>
            <person name="Shibata K."/>
            <person name="Shiraki T."/>
            <person name="Suzuki S."/>
            <person name="Tagami M."/>
            <person name="Waki K."/>
            <person name="Watahiki A."/>
            <person name="Okamura-Oho Y."/>
            <person name="Suzuki H."/>
            <person name="Kawai J."/>
            <person name="Hayashizaki Y."/>
        </authorList>
    </citation>
    <scope>NUCLEOTIDE SEQUENCE [LARGE SCALE MRNA]</scope>
    <source>
        <strain>C57BL/6J</strain>
        <tissue>Spleen</tissue>
    </source>
</reference>
<reference key="4">
    <citation type="journal article" date="2009" name="PLoS Biol.">
        <title>Lineage-specific biology revealed by a finished genome assembly of the mouse.</title>
        <authorList>
            <person name="Church D.M."/>
            <person name="Goodstadt L."/>
            <person name="Hillier L.W."/>
            <person name="Zody M.C."/>
            <person name="Goldstein S."/>
            <person name="She X."/>
            <person name="Bult C.J."/>
            <person name="Agarwala R."/>
            <person name="Cherry J.L."/>
            <person name="DiCuccio M."/>
            <person name="Hlavina W."/>
            <person name="Kapustin Y."/>
            <person name="Meric P."/>
            <person name="Maglott D."/>
            <person name="Birtle Z."/>
            <person name="Marques A.C."/>
            <person name="Graves T."/>
            <person name="Zhou S."/>
            <person name="Teague B."/>
            <person name="Potamousis K."/>
            <person name="Churas C."/>
            <person name="Place M."/>
            <person name="Herschleb J."/>
            <person name="Runnheim R."/>
            <person name="Forrest D."/>
            <person name="Amos-Landgraf J."/>
            <person name="Schwartz D.C."/>
            <person name="Cheng Z."/>
            <person name="Lindblad-Toh K."/>
            <person name="Eichler E.E."/>
            <person name="Ponting C.P."/>
        </authorList>
    </citation>
    <scope>NUCLEOTIDE SEQUENCE [LARGE SCALE GENOMIC DNA]</scope>
    <source>
        <strain>C57BL/6J</strain>
    </source>
</reference>
<reference key="5">
    <citation type="journal article" date="2004" name="Genome Res.">
        <title>The status, quality, and expansion of the NIH full-length cDNA project: the Mammalian Gene Collection (MGC).</title>
        <authorList>
            <consortium name="The MGC Project Team"/>
        </authorList>
    </citation>
    <scope>NUCLEOTIDE SEQUENCE [LARGE SCALE MRNA]</scope>
    <source>
        <strain>FVB/N</strain>
        <tissue>Kidney</tissue>
    </source>
</reference>
<reference key="6">
    <citation type="journal article" date="2010" name="Cell">
        <title>A tissue-specific atlas of mouse protein phosphorylation and expression.</title>
        <authorList>
            <person name="Huttlin E.L."/>
            <person name="Jedrychowski M.P."/>
            <person name="Elias J.E."/>
            <person name="Goswami T."/>
            <person name="Rad R."/>
            <person name="Beausoleil S.A."/>
            <person name="Villen J."/>
            <person name="Haas W."/>
            <person name="Sowa M.E."/>
            <person name="Gygi S.P."/>
        </authorList>
    </citation>
    <scope>IDENTIFICATION BY MASS SPECTROMETRY [LARGE SCALE ANALYSIS]</scope>
    <source>
        <tissue>Kidney</tissue>
    </source>
</reference>
<reference key="7">
    <citation type="journal article" date="2016" name="Proc. Natl. Acad. Sci. U.S.A.">
        <title>Novel cystine transporter in renal proximal tubule identified as a missing partner of cystinuria-related plasma membrane protein rBAT/SLC3A1.</title>
        <authorList>
            <person name="Nagamori S."/>
            <person name="Wiriyasermkul P."/>
            <person name="Guarch M.E."/>
            <person name="Okuyama H."/>
            <person name="Nakagomi S."/>
            <person name="Tadagaki K."/>
            <person name="Nishinaka Y."/>
            <person name="Bodoy S."/>
            <person name="Takafuji K."/>
            <person name="Okuda S."/>
            <person name="Kurokawa J."/>
            <person name="Ohgaki R."/>
            <person name="Nunes V."/>
            <person name="Palacin M."/>
            <person name="Kanai Y."/>
        </authorList>
    </citation>
    <scope>FUNCTION</scope>
    <scope>CATALYTIC ACTIVITY</scope>
    <scope>BIOPHYSICOCHEMICAL PROPERTIES</scope>
    <scope>SUBUNIT</scope>
    <scope>INTERACTION WITH SLC3A1</scope>
    <scope>SUBCELLULAR LOCATION</scope>
    <scope>TISSUE SPECIFICITY</scope>
</reference>
<dbReference type="EMBL" id="AJ417662">
    <property type="protein sequence ID" value="CAD10394.1"/>
    <property type="molecule type" value="mRNA"/>
</dbReference>
<dbReference type="EMBL" id="AB072352">
    <property type="protein sequence ID" value="BAC00494.1"/>
    <property type="molecule type" value="mRNA"/>
</dbReference>
<dbReference type="EMBL" id="AK143768">
    <property type="protein sequence ID" value="BAE25532.1"/>
    <property type="molecule type" value="mRNA"/>
</dbReference>
<dbReference type="EMBL" id="BX470225">
    <property type="status" value="NOT_ANNOTATED_CDS"/>
    <property type="molecule type" value="Genomic_DNA"/>
</dbReference>
<dbReference type="EMBL" id="BC014684">
    <property type="protein sequence ID" value="AAH14684.1"/>
    <property type="molecule type" value="mRNA"/>
</dbReference>
<dbReference type="CCDS" id="CCDS17993.1"/>
<dbReference type="RefSeq" id="NP_083022.1">
    <property type="nucleotide sequence ID" value="NM_028746.3"/>
</dbReference>
<dbReference type="SMR" id="Q91WN3"/>
<dbReference type="FunCoup" id="Q91WN3">
    <property type="interactions" value="6"/>
</dbReference>
<dbReference type="STRING" id="10090.ENSMUSP00000036228"/>
<dbReference type="TCDB" id="2.A.3.8.8">
    <property type="family name" value="the amino acid-polyamine-organocation (apc) family"/>
</dbReference>
<dbReference type="PhosphoSitePlus" id="Q91WN3"/>
<dbReference type="jPOST" id="Q91WN3"/>
<dbReference type="PaxDb" id="10090-ENSMUSP00000036228"/>
<dbReference type="ProteomicsDB" id="256911"/>
<dbReference type="Antibodypedia" id="54555">
    <property type="antibodies" value="4 antibodies from 4 providers"/>
</dbReference>
<dbReference type="DNASU" id="74087"/>
<dbReference type="Ensembl" id="ENSMUST00000035890.8">
    <property type="protein sequence ID" value="ENSMUSP00000036228.8"/>
    <property type="gene ID" value="ENSMUSG00000041052.9"/>
</dbReference>
<dbReference type="GeneID" id="74087"/>
<dbReference type="KEGG" id="mmu:74087"/>
<dbReference type="UCSC" id="uc008scf.2">
    <property type="organism name" value="mouse"/>
</dbReference>
<dbReference type="AGR" id="MGI:1921337"/>
<dbReference type="CTD" id="157724"/>
<dbReference type="MGI" id="MGI:1921337">
    <property type="gene designation" value="Slc7a13"/>
</dbReference>
<dbReference type="VEuPathDB" id="HostDB:ENSMUSG00000041052"/>
<dbReference type="eggNOG" id="KOG1287">
    <property type="taxonomic scope" value="Eukaryota"/>
</dbReference>
<dbReference type="GeneTree" id="ENSGT00940000162798"/>
<dbReference type="HOGENOM" id="CLU_007946_3_0_1"/>
<dbReference type="InParanoid" id="Q91WN3"/>
<dbReference type="OMA" id="EGSNWSW"/>
<dbReference type="OrthoDB" id="5982228at2759"/>
<dbReference type="PhylomeDB" id="Q91WN3"/>
<dbReference type="TreeFam" id="TF313355"/>
<dbReference type="BioGRID-ORCS" id="74087">
    <property type="hits" value="4 hits in 77 CRISPR screens"/>
</dbReference>
<dbReference type="PRO" id="PR:Q91WN3"/>
<dbReference type="Proteomes" id="UP000000589">
    <property type="component" value="Chromosome 4"/>
</dbReference>
<dbReference type="RNAct" id="Q91WN3">
    <property type="molecule type" value="protein"/>
</dbReference>
<dbReference type="Bgee" id="ENSMUSG00000041052">
    <property type="expression patterns" value="Expressed in right kidney and 30 other cell types or tissues"/>
</dbReference>
<dbReference type="GO" id="GO:0016324">
    <property type="term" value="C:apical plasma membrane"/>
    <property type="evidence" value="ECO:0000314"/>
    <property type="project" value="MGI"/>
</dbReference>
<dbReference type="GO" id="GO:0015297">
    <property type="term" value="F:antiporter activity"/>
    <property type="evidence" value="ECO:0007669"/>
    <property type="project" value="UniProtKB-KW"/>
</dbReference>
<dbReference type="GO" id="GO:0046982">
    <property type="term" value="F:protein heterodimerization activity"/>
    <property type="evidence" value="ECO:0000353"/>
    <property type="project" value="MGI"/>
</dbReference>
<dbReference type="GO" id="GO:0015810">
    <property type="term" value="P:aspartate transmembrane transport"/>
    <property type="evidence" value="ECO:0000314"/>
    <property type="project" value="MGI"/>
</dbReference>
<dbReference type="GO" id="GO:0015811">
    <property type="term" value="P:L-cystine transport"/>
    <property type="evidence" value="ECO:0000314"/>
    <property type="project" value="MGI"/>
</dbReference>
<dbReference type="GO" id="GO:0015813">
    <property type="term" value="P:L-glutamate transmembrane transport"/>
    <property type="evidence" value="ECO:0000314"/>
    <property type="project" value="MGI"/>
</dbReference>
<dbReference type="FunFam" id="1.20.1740.10:FF:000036">
    <property type="entry name" value="Solute carrier family 7 member 13"/>
    <property type="match status" value="1"/>
</dbReference>
<dbReference type="Gene3D" id="1.20.1740.10">
    <property type="entry name" value="Amino acid/polyamine transporter I"/>
    <property type="match status" value="1"/>
</dbReference>
<dbReference type="InterPro" id="IPR002293">
    <property type="entry name" value="AA/rel_permease1"/>
</dbReference>
<dbReference type="InterPro" id="IPR050598">
    <property type="entry name" value="AminoAcid_Transporter"/>
</dbReference>
<dbReference type="PANTHER" id="PTHR11785">
    <property type="entry name" value="AMINO ACID TRANSPORTER"/>
    <property type="match status" value="1"/>
</dbReference>
<dbReference type="PANTHER" id="PTHR11785:SF238">
    <property type="entry name" value="SOLUTE CARRIER FAMILY 7 MEMBER 13"/>
    <property type="match status" value="1"/>
</dbReference>
<dbReference type="Pfam" id="PF13520">
    <property type="entry name" value="AA_permease_2"/>
    <property type="match status" value="1"/>
</dbReference>
<dbReference type="PIRSF" id="PIRSF006060">
    <property type="entry name" value="AA_transporter"/>
    <property type="match status" value="1"/>
</dbReference>
<proteinExistence type="evidence at protein level"/>